<gene>
    <name type="primary">midn-a</name>
</gene>
<sequence>MEQQPSVPRSCTNVARETPMNLNIQSTTGTRYELSVPPDETVDGLKRRISQRLKVPKDRLTLLHRETRLSSGKLQDLGISDGSRLTLLPSVEAGLMSQMSRPEQSVMQALESLTETQVNDFLSGRSPLTLALRVGDHMMFVQLQLAAQQSGSSHLQHRHVITRGAETSASPQYRTLHTSTSAVSHLASCTPGPTPPTTLSPTSSTHCNGPHSSPLTTSVFRSHGEGVAVSPCAEQAPCSTRGTEGTSSSPSSRSRKPGAIIESFVNHAPGVFSGTFSGTLHPQCQDSAGRPRRDIGTILQILNDLLSATRHYQGMPPSLTTLRCHTQCASQARNAKATSPQSTSPQQTTHPVGHCQTQTRTYKPSGDRLRQTENRATRCKVERLQLLMHQKRLRRKARRDSRAPYHWMPTRKSSRTSSNSSTSSGEGSLEIDFEDSLWKPDVKAELNSEFVVA</sequence>
<name>MIDNA_XENLA</name>
<keyword id="KW-0963">Cytoplasm</keyword>
<keyword id="KW-0539">Nucleus</keyword>
<keyword id="KW-1185">Reference proteome</keyword>
<reference key="1">
    <citation type="submission" date="2003-02" db="EMBL/GenBank/DDBJ databases">
        <authorList>
            <consortium name="NIH - Xenopus Gene Collection (XGC) project"/>
        </authorList>
    </citation>
    <scope>NUCLEOTIDE SEQUENCE [LARGE SCALE MRNA]</scope>
    <source>
        <tissue>Embryo</tissue>
    </source>
</reference>
<organism>
    <name type="scientific">Xenopus laevis</name>
    <name type="common">African clawed frog</name>
    <dbReference type="NCBI Taxonomy" id="8355"/>
    <lineage>
        <taxon>Eukaryota</taxon>
        <taxon>Metazoa</taxon>
        <taxon>Chordata</taxon>
        <taxon>Craniata</taxon>
        <taxon>Vertebrata</taxon>
        <taxon>Euteleostomi</taxon>
        <taxon>Amphibia</taxon>
        <taxon>Batrachia</taxon>
        <taxon>Anura</taxon>
        <taxon>Pipoidea</taxon>
        <taxon>Pipidae</taxon>
        <taxon>Xenopodinae</taxon>
        <taxon>Xenopus</taxon>
        <taxon>Xenopus</taxon>
    </lineage>
</organism>
<accession>Q7ZWN4</accession>
<comment type="function">
    <text evidence="1 2">Facilitates ubiquitin-independent proteasomal degradation of polycomb protein CBX4. Plays a role in inhibiting the activity of glucokinase GCK and both glucose-induced and basal insulin secretion.</text>
</comment>
<comment type="subcellular location">
    <subcellularLocation>
        <location evidence="2">Nucleus</location>
    </subcellularLocation>
    <subcellularLocation>
        <location evidence="2">Cytoplasm</location>
        <location evidence="2">Cytosol</location>
    </subcellularLocation>
    <subcellularLocation>
        <location evidence="2">Nucleus</location>
        <location evidence="2">Nucleolus</location>
    </subcellularLocation>
    <text evidence="2">Detected in the nucleus and nucleolus with no expression in the cytoplasm. However, a later study finds expression in the nucleus and cytoplasm with no expression in the nucleolus.</text>
</comment>
<evidence type="ECO:0000250" key="1">
    <source>
        <dbReference type="UniProtKB" id="D4AE48"/>
    </source>
</evidence>
<evidence type="ECO:0000250" key="2">
    <source>
        <dbReference type="UniProtKB" id="Q3TPJ7"/>
    </source>
</evidence>
<evidence type="ECO:0000255" key="3">
    <source>
        <dbReference type="PROSITE-ProRule" id="PRU00214"/>
    </source>
</evidence>
<evidence type="ECO:0000256" key="4">
    <source>
        <dbReference type="SAM" id="MobiDB-lite"/>
    </source>
</evidence>
<protein>
    <recommendedName>
        <fullName>Midnolin-A</fullName>
    </recommendedName>
    <alternativeName>
        <fullName>Midbrain nucleolar protein A</fullName>
    </alternativeName>
</protein>
<feature type="chain" id="PRO_0000287539" description="Midnolin-A">
    <location>
        <begin position="1"/>
        <end position="453"/>
    </location>
</feature>
<feature type="domain" description="Ubiquitin-like" evidence="3">
    <location>
        <begin position="20"/>
        <end position="94"/>
    </location>
</feature>
<feature type="region of interest" description="Disordered" evidence="4">
    <location>
        <begin position="184"/>
        <end position="219"/>
    </location>
</feature>
<feature type="region of interest" description="Disordered" evidence="4">
    <location>
        <begin position="232"/>
        <end position="256"/>
    </location>
</feature>
<feature type="region of interest" description="Disordered" evidence="4">
    <location>
        <begin position="333"/>
        <end position="376"/>
    </location>
</feature>
<feature type="region of interest" description="Disordered" evidence="4">
    <location>
        <begin position="390"/>
        <end position="429"/>
    </location>
</feature>
<feature type="compositionally biased region" description="Polar residues" evidence="4">
    <location>
        <begin position="206"/>
        <end position="219"/>
    </location>
</feature>
<feature type="compositionally biased region" description="Low complexity" evidence="4">
    <location>
        <begin position="239"/>
        <end position="252"/>
    </location>
</feature>
<feature type="compositionally biased region" description="Low complexity" evidence="4">
    <location>
        <begin position="338"/>
        <end position="351"/>
    </location>
</feature>
<feature type="compositionally biased region" description="Basic and acidic residues" evidence="4">
    <location>
        <begin position="365"/>
        <end position="376"/>
    </location>
</feature>
<feature type="compositionally biased region" description="Basic residues" evidence="4">
    <location>
        <begin position="390"/>
        <end position="399"/>
    </location>
</feature>
<feature type="compositionally biased region" description="Low complexity" evidence="4">
    <location>
        <begin position="415"/>
        <end position="428"/>
    </location>
</feature>
<proteinExistence type="evidence at transcript level"/>
<dbReference type="EMBL" id="BC046865">
    <property type="protein sequence ID" value="AAH46865.1"/>
    <property type="molecule type" value="mRNA"/>
</dbReference>
<dbReference type="RefSeq" id="NP_001079678.1">
    <property type="nucleotide sequence ID" value="NM_001086209.1"/>
</dbReference>
<dbReference type="SMR" id="Q7ZWN4"/>
<dbReference type="DNASU" id="379365"/>
<dbReference type="GeneID" id="379365"/>
<dbReference type="KEGG" id="xla:379365"/>
<dbReference type="AGR" id="Xenbase:XB-GENE-1005239"/>
<dbReference type="CTD" id="379365"/>
<dbReference type="Xenbase" id="XB-GENE-1005239">
    <property type="gene designation" value="midn.L"/>
</dbReference>
<dbReference type="OMA" id="ADMKPEF"/>
<dbReference type="OrthoDB" id="1916003at2759"/>
<dbReference type="Proteomes" id="UP000186698">
    <property type="component" value="Chromosome 1L"/>
</dbReference>
<dbReference type="Bgee" id="379365">
    <property type="expression patterns" value="Expressed in neurula embryo and 19 other cell types or tissues"/>
</dbReference>
<dbReference type="GO" id="GO:0005829">
    <property type="term" value="C:cytosol"/>
    <property type="evidence" value="ECO:0007669"/>
    <property type="project" value="UniProtKB-SubCell"/>
</dbReference>
<dbReference type="GO" id="GO:0005730">
    <property type="term" value="C:nucleolus"/>
    <property type="evidence" value="ECO:0007669"/>
    <property type="project" value="UniProtKB-SubCell"/>
</dbReference>
<dbReference type="GO" id="GO:0005634">
    <property type="term" value="C:nucleus"/>
    <property type="evidence" value="ECO:0000318"/>
    <property type="project" value="GO_Central"/>
</dbReference>
<dbReference type="CDD" id="cd01804">
    <property type="entry name" value="Ubl_midnolin"/>
    <property type="match status" value="1"/>
</dbReference>
<dbReference type="FunFam" id="3.10.20.90:FF:000180">
    <property type="entry name" value="midnolin isoform X1"/>
    <property type="match status" value="1"/>
</dbReference>
<dbReference type="Gene3D" id="3.10.20.90">
    <property type="entry name" value="Phosphatidylinositol 3-kinase Catalytic Subunit, Chain A, domain 1"/>
    <property type="match status" value="1"/>
</dbReference>
<dbReference type="InterPro" id="IPR039336">
    <property type="entry name" value="Midnolin"/>
</dbReference>
<dbReference type="InterPro" id="IPR000626">
    <property type="entry name" value="Ubiquitin-like_dom"/>
</dbReference>
<dbReference type="InterPro" id="IPR029071">
    <property type="entry name" value="Ubiquitin-like_domsf"/>
</dbReference>
<dbReference type="PANTHER" id="PTHR23010">
    <property type="entry name" value="MIDNOLIN"/>
    <property type="match status" value="1"/>
</dbReference>
<dbReference type="PANTHER" id="PTHR23010:SF1">
    <property type="entry name" value="MIDNOLIN"/>
    <property type="match status" value="1"/>
</dbReference>
<dbReference type="Pfam" id="PF00240">
    <property type="entry name" value="ubiquitin"/>
    <property type="match status" value="1"/>
</dbReference>
<dbReference type="SMART" id="SM00213">
    <property type="entry name" value="UBQ"/>
    <property type="match status" value="1"/>
</dbReference>
<dbReference type="SUPFAM" id="SSF54236">
    <property type="entry name" value="Ubiquitin-like"/>
    <property type="match status" value="1"/>
</dbReference>
<dbReference type="PROSITE" id="PS50053">
    <property type="entry name" value="UBIQUITIN_2"/>
    <property type="match status" value="1"/>
</dbReference>